<name>IRAP_SALCH</name>
<protein>
    <recommendedName>
        <fullName evidence="1">Anti-adapter protein IraP</fullName>
    </recommendedName>
</protein>
<keyword id="KW-0175">Coiled coil</keyword>
<keyword id="KW-0963">Cytoplasm</keyword>
<keyword id="KW-0346">Stress response</keyword>
<feature type="chain" id="PRO_0000337859" description="Anti-adapter protein IraP">
    <location>
        <begin position="1"/>
        <end position="86"/>
    </location>
</feature>
<feature type="coiled-coil region" evidence="1">
    <location>
        <begin position="1"/>
        <end position="36"/>
    </location>
</feature>
<reference key="1">
    <citation type="journal article" date="2005" name="Nucleic Acids Res.">
        <title>The genome sequence of Salmonella enterica serovar Choleraesuis, a highly invasive and resistant zoonotic pathogen.</title>
        <authorList>
            <person name="Chiu C.-H."/>
            <person name="Tang P."/>
            <person name="Chu C."/>
            <person name="Hu S."/>
            <person name="Bao Q."/>
            <person name="Yu J."/>
            <person name="Chou Y.-Y."/>
            <person name="Wang H.-S."/>
            <person name="Lee Y.-S."/>
        </authorList>
    </citation>
    <scope>NUCLEOTIDE SEQUENCE [LARGE SCALE GENOMIC DNA]</scope>
    <source>
        <strain>SC-B67</strain>
    </source>
</reference>
<sequence length="86" mass="9883">MKNLIAELLLKLAQKEEESKELVAQVEALEIIVTAMLRNMAQNEQEMLIRQVEGALEGVKPDASVPDHDTELLRQYVKKLLRHPRH</sequence>
<gene>
    <name evidence="1" type="primary">iraP</name>
    <name type="ordered locus">SCH_0424</name>
</gene>
<evidence type="ECO:0000255" key="1">
    <source>
        <dbReference type="HAMAP-Rule" id="MF_01198"/>
    </source>
</evidence>
<organism>
    <name type="scientific">Salmonella choleraesuis (strain SC-B67)</name>
    <dbReference type="NCBI Taxonomy" id="321314"/>
    <lineage>
        <taxon>Bacteria</taxon>
        <taxon>Pseudomonadati</taxon>
        <taxon>Pseudomonadota</taxon>
        <taxon>Gammaproteobacteria</taxon>
        <taxon>Enterobacterales</taxon>
        <taxon>Enterobacteriaceae</taxon>
        <taxon>Salmonella</taxon>
    </lineage>
</organism>
<comment type="function">
    <text evidence="1">Inhibits RpoS proteolysis by regulating RssB activity, thereby increasing the stability of the sigma stress factor RpoS especially during phosphate and magnesium starvation, but also in stationary phase and during nitrogen starvation. Its effect on RpoS stability is due to its interaction with RssB, which probably blocks the interaction of RssB with RpoS, and the consequent delivery of the RssB-RpoS complex to the ClpXP protein degradation pathway.</text>
</comment>
<comment type="subunit">
    <text evidence="1">Interacts with RssB.</text>
</comment>
<comment type="subcellular location">
    <subcellularLocation>
        <location evidence="1">Cytoplasm</location>
    </subcellularLocation>
</comment>
<comment type="similarity">
    <text evidence="1">Belongs to the IraP family.</text>
</comment>
<proteinExistence type="inferred from homology"/>
<dbReference type="EMBL" id="AE017220">
    <property type="protein sequence ID" value="AAX64330.1"/>
    <property type="molecule type" value="Genomic_DNA"/>
</dbReference>
<dbReference type="RefSeq" id="WP_001518423.1">
    <property type="nucleotide sequence ID" value="NC_006905.1"/>
</dbReference>
<dbReference type="SMR" id="Q57SI1"/>
<dbReference type="KEGG" id="sec:SCH_0424"/>
<dbReference type="HOGENOM" id="CLU_169517_0_0_6"/>
<dbReference type="Proteomes" id="UP000000538">
    <property type="component" value="Chromosome"/>
</dbReference>
<dbReference type="GO" id="GO:0005737">
    <property type="term" value="C:cytoplasm"/>
    <property type="evidence" value="ECO:0007669"/>
    <property type="project" value="UniProtKB-SubCell"/>
</dbReference>
<dbReference type="GO" id="GO:0009267">
    <property type="term" value="P:cellular response to starvation"/>
    <property type="evidence" value="ECO:0007669"/>
    <property type="project" value="UniProtKB-UniRule"/>
</dbReference>
<dbReference type="HAMAP" id="MF_01198">
    <property type="entry name" value="Anti_adapt_IraP"/>
    <property type="match status" value="1"/>
</dbReference>
<dbReference type="InterPro" id="IPR019732">
    <property type="entry name" value="SigmaS_Anti-adapt_IraP"/>
</dbReference>
<dbReference type="NCBIfam" id="NF007598">
    <property type="entry name" value="PRK10244.1"/>
    <property type="match status" value="1"/>
</dbReference>
<dbReference type="Pfam" id="PF10796">
    <property type="entry name" value="Anti-adapt_IraP"/>
    <property type="match status" value="1"/>
</dbReference>
<accession>Q57SI1</accession>